<keyword id="KW-0687">Ribonucleoprotein</keyword>
<keyword id="KW-0689">Ribosomal protein</keyword>
<keyword id="KW-0694">RNA-binding</keyword>
<keyword id="KW-0699">rRNA-binding</keyword>
<evidence type="ECO:0000255" key="1">
    <source>
        <dbReference type="HAMAP-Rule" id="MF_01363"/>
    </source>
</evidence>
<evidence type="ECO:0000256" key="2">
    <source>
        <dbReference type="SAM" id="MobiDB-lite"/>
    </source>
</evidence>
<evidence type="ECO:0000305" key="3"/>
<name>RL21_DEHM1</name>
<dbReference type="EMBL" id="CP000027">
    <property type="protein sequence ID" value="AAW39460.1"/>
    <property type="molecule type" value="Genomic_DNA"/>
</dbReference>
<dbReference type="RefSeq" id="WP_010937013.1">
    <property type="nucleotide sequence ID" value="NC_002936.3"/>
</dbReference>
<dbReference type="SMR" id="Q3Z6W3"/>
<dbReference type="FunCoup" id="Q3Z6W3">
    <property type="interactions" value="295"/>
</dbReference>
<dbReference type="STRING" id="243164.DET1325"/>
<dbReference type="GeneID" id="3229420"/>
<dbReference type="KEGG" id="det:DET1325"/>
<dbReference type="eggNOG" id="COG0261">
    <property type="taxonomic scope" value="Bacteria"/>
</dbReference>
<dbReference type="HOGENOM" id="CLU_061463_1_1_0"/>
<dbReference type="InParanoid" id="Q3Z6W3"/>
<dbReference type="Proteomes" id="UP000008289">
    <property type="component" value="Chromosome"/>
</dbReference>
<dbReference type="GO" id="GO:0005737">
    <property type="term" value="C:cytoplasm"/>
    <property type="evidence" value="ECO:0007669"/>
    <property type="project" value="UniProtKB-ARBA"/>
</dbReference>
<dbReference type="GO" id="GO:1990904">
    <property type="term" value="C:ribonucleoprotein complex"/>
    <property type="evidence" value="ECO:0007669"/>
    <property type="project" value="UniProtKB-KW"/>
</dbReference>
<dbReference type="GO" id="GO:0005840">
    <property type="term" value="C:ribosome"/>
    <property type="evidence" value="ECO:0007669"/>
    <property type="project" value="UniProtKB-KW"/>
</dbReference>
<dbReference type="GO" id="GO:0019843">
    <property type="term" value="F:rRNA binding"/>
    <property type="evidence" value="ECO:0007669"/>
    <property type="project" value="UniProtKB-UniRule"/>
</dbReference>
<dbReference type="GO" id="GO:0003735">
    <property type="term" value="F:structural constituent of ribosome"/>
    <property type="evidence" value="ECO:0007669"/>
    <property type="project" value="InterPro"/>
</dbReference>
<dbReference type="GO" id="GO:0006412">
    <property type="term" value="P:translation"/>
    <property type="evidence" value="ECO:0007669"/>
    <property type="project" value="UniProtKB-UniRule"/>
</dbReference>
<dbReference type="HAMAP" id="MF_01363">
    <property type="entry name" value="Ribosomal_bL21"/>
    <property type="match status" value="1"/>
</dbReference>
<dbReference type="InterPro" id="IPR028909">
    <property type="entry name" value="bL21-like"/>
</dbReference>
<dbReference type="InterPro" id="IPR036164">
    <property type="entry name" value="bL21-like_sf"/>
</dbReference>
<dbReference type="InterPro" id="IPR001787">
    <property type="entry name" value="Ribosomal_bL21"/>
</dbReference>
<dbReference type="NCBIfam" id="TIGR00061">
    <property type="entry name" value="L21"/>
    <property type="match status" value="1"/>
</dbReference>
<dbReference type="PANTHER" id="PTHR21349">
    <property type="entry name" value="50S RIBOSOMAL PROTEIN L21"/>
    <property type="match status" value="1"/>
</dbReference>
<dbReference type="PANTHER" id="PTHR21349:SF0">
    <property type="entry name" value="LARGE RIBOSOMAL SUBUNIT PROTEIN BL21M"/>
    <property type="match status" value="1"/>
</dbReference>
<dbReference type="Pfam" id="PF00829">
    <property type="entry name" value="Ribosomal_L21p"/>
    <property type="match status" value="1"/>
</dbReference>
<dbReference type="SUPFAM" id="SSF141091">
    <property type="entry name" value="L21p-like"/>
    <property type="match status" value="1"/>
</dbReference>
<reference key="1">
    <citation type="journal article" date="2005" name="Science">
        <title>Genome sequence of the PCE-dechlorinating bacterium Dehalococcoides ethenogenes.</title>
        <authorList>
            <person name="Seshadri R."/>
            <person name="Adrian L."/>
            <person name="Fouts D.E."/>
            <person name="Eisen J.A."/>
            <person name="Phillippy A.M."/>
            <person name="Methe B.A."/>
            <person name="Ward N.L."/>
            <person name="Nelson W.C."/>
            <person name="DeBoy R.T."/>
            <person name="Khouri H.M."/>
            <person name="Kolonay J.F."/>
            <person name="Dodson R.J."/>
            <person name="Daugherty S.C."/>
            <person name="Brinkac L.M."/>
            <person name="Sullivan S.A."/>
            <person name="Madupu R."/>
            <person name="Nelson K.E."/>
            <person name="Kang K.H."/>
            <person name="Impraim M."/>
            <person name="Tran K."/>
            <person name="Robinson J.M."/>
            <person name="Forberger H.A."/>
            <person name="Fraser C.M."/>
            <person name="Zinder S.H."/>
            <person name="Heidelberg J.F."/>
        </authorList>
    </citation>
    <scope>NUCLEOTIDE SEQUENCE [LARGE SCALE GENOMIC DNA]</scope>
    <source>
        <strain>ATCC BAA-2266 / KCTC 15142 / 195</strain>
    </source>
</reference>
<organism>
    <name type="scientific">Dehalococcoides mccartyi (strain ATCC BAA-2266 / KCTC 15142 / 195)</name>
    <name type="common">Dehalococcoides ethenogenes (strain 195)</name>
    <dbReference type="NCBI Taxonomy" id="243164"/>
    <lineage>
        <taxon>Bacteria</taxon>
        <taxon>Bacillati</taxon>
        <taxon>Chloroflexota</taxon>
        <taxon>Dehalococcoidia</taxon>
        <taxon>Dehalococcoidales</taxon>
        <taxon>Dehalococcoidaceae</taxon>
        <taxon>Dehalococcoides</taxon>
    </lineage>
</organism>
<comment type="function">
    <text evidence="1">This protein binds to 23S rRNA in the presence of protein L20.</text>
</comment>
<comment type="subunit">
    <text evidence="1">Part of the 50S ribosomal subunit. Contacts protein L20.</text>
</comment>
<comment type="similarity">
    <text evidence="1">Belongs to the bacterial ribosomal protein bL21 family.</text>
</comment>
<protein>
    <recommendedName>
        <fullName evidence="1">Large ribosomal subunit protein bL21</fullName>
    </recommendedName>
    <alternativeName>
        <fullName evidence="3">50S ribosomal protein L21</fullName>
    </alternativeName>
</protein>
<gene>
    <name evidence="1" type="primary">rplU</name>
    <name type="ordered locus">DET1325</name>
</gene>
<sequence>MGGVNIYAIIESGGKQYKVTPGQLVEVDLFDLAEGDSIELDKVLMLNDGETVTIGSPTVPGAKVTATVAGHIKGDKVFAYRFKAKSRNHKKTGHRQLYTVLTIGEILTGGAAEKPARKPRAKKTNEVTTDGA</sequence>
<proteinExistence type="inferred from homology"/>
<accession>Q3Z6W3</accession>
<feature type="chain" id="PRO_0000270659" description="Large ribosomal subunit protein bL21">
    <location>
        <begin position="1"/>
        <end position="132"/>
    </location>
</feature>
<feature type="region of interest" description="Disordered" evidence="2">
    <location>
        <begin position="112"/>
        <end position="132"/>
    </location>
</feature>